<sequence>MDLNFDLYMNGVVEQARNEIENAGYEQLTTADEVDKVLQQNGTSLVMVNSVCGCAGGIARPAASHALHYDKLPDRLVTVFAGQDKEATQQARDYFEGYAPSSPSFALIKDGKITEMIERHQIEGHDVMDVINQLQGLFDKYCDER</sequence>
<gene>
    <name type="ordered locus">SH1401</name>
</gene>
<protein>
    <recommendedName>
        <fullName evidence="1">Bacilliredoxin SH1401</fullName>
    </recommendedName>
</protein>
<reference key="1">
    <citation type="journal article" date="2005" name="J. Bacteriol.">
        <title>Whole-genome sequencing of Staphylococcus haemolyticus uncovers the extreme plasticity of its genome and the evolution of human-colonizing staphylococcal species.</title>
        <authorList>
            <person name="Takeuchi F."/>
            <person name="Watanabe S."/>
            <person name="Baba T."/>
            <person name="Yuzawa H."/>
            <person name="Ito T."/>
            <person name="Morimoto Y."/>
            <person name="Kuroda M."/>
            <person name="Cui L."/>
            <person name="Takahashi M."/>
            <person name="Ankai A."/>
            <person name="Baba S."/>
            <person name="Fukui S."/>
            <person name="Lee J.C."/>
            <person name="Hiramatsu K."/>
        </authorList>
    </citation>
    <scope>NUCLEOTIDE SEQUENCE [LARGE SCALE GENOMIC DNA]</scope>
    <source>
        <strain>JCSC1435</strain>
    </source>
</reference>
<feature type="chain" id="PRO_0000272017" description="Bacilliredoxin SH1401">
    <location>
        <begin position="1"/>
        <end position="145"/>
    </location>
</feature>
<accession>Q4L6L5</accession>
<proteinExistence type="inferred from homology"/>
<dbReference type="EMBL" id="AP006716">
    <property type="protein sequence ID" value="BAE04710.1"/>
    <property type="molecule type" value="Genomic_DNA"/>
</dbReference>
<dbReference type="SMR" id="Q4L6L5"/>
<dbReference type="KEGG" id="sha:SH1401"/>
<dbReference type="eggNOG" id="ENOG502ZBVN">
    <property type="taxonomic scope" value="Bacteria"/>
</dbReference>
<dbReference type="HOGENOM" id="CLU_132521_0_0_9"/>
<dbReference type="OrthoDB" id="9793981at2"/>
<dbReference type="Proteomes" id="UP000000543">
    <property type="component" value="Chromosome"/>
</dbReference>
<dbReference type="GO" id="GO:0045454">
    <property type="term" value="P:cell redox homeostasis"/>
    <property type="evidence" value="ECO:0000250"/>
    <property type="project" value="UniProtKB"/>
</dbReference>
<dbReference type="Gene3D" id="3.40.30.10">
    <property type="entry name" value="Glutaredoxin"/>
    <property type="match status" value="1"/>
</dbReference>
<dbReference type="InterPro" id="IPR009474">
    <property type="entry name" value="BrxB/BrxA"/>
</dbReference>
<dbReference type="NCBIfam" id="TIGR04191">
    <property type="entry name" value="YphP_YqiW"/>
    <property type="match status" value="1"/>
</dbReference>
<dbReference type="PANTHER" id="PTHR40052:SF1">
    <property type="entry name" value="BACILLIREDOXIN BRXB"/>
    <property type="match status" value="1"/>
</dbReference>
<dbReference type="PANTHER" id="PTHR40052">
    <property type="entry name" value="UPF0403 PROTEIN YQIW-RELATED"/>
    <property type="match status" value="1"/>
</dbReference>
<dbReference type="Pfam" id="PF06491">
    <property type="entry name" value="Disulph_isomer"/>
    <property type="match status" value="1"/>
</dbReference>
<evidence type="ECO:0000305" key="1"/>
<organism>
    <name type="scientific">Staphylococcus haemolyticus (strain JCSC1435)</name>
    <dbReference type="NCBI Taxonomy" id="279808"/>
    <lineage>
        <taxon>Bacteria</taxon>
        <taxon>Bacillati</taxon>
        <taxon>Bacillota</taxon>
        <taxon>Bacilli</taxon>
        <taxon>Bacillales</taxon>
        <taxon>Staphylococcaceae</taxon>
        <taxon>Staphylococcus</taxon>
    </lineage>
</organism>
<comment type="similarity">
    <text evidence="1">Belongs to the bacilliredoxin family.</text>
</comment>
<name>Y1401_STAHJ</name>